<accession>Q083H7</accession>
<name>Y1738_SHEFN</name>
<protein>
    <recommendedName>
        <fullName evidence="1">YcgL domain-containing protein Sfri_1738</fullName>
    </recommendedName>
</protein>
<proteinExistence type="inferred from homology"/>
<keyword id="KW-1185">Reference proteome</keyword>
<reference key="1">
    <citation type="submission" date="2006-08" db="EMBL/GenBank/DDBJ databases">
        <title>Complete sequence of Shewanella frigidimarina NCIMB 400.</title>
        <authorList>
            <consortium name="US DOE Joint Genome Institute"/>
            <person name="Copeland A."/>
            <person name="Lucas S."/>
            <person name="Lapidus A."/>
            <person name="Barry K."/>
            <person name="Detter J.C."/>
            <person name="Glavina del Rio T."/>
            <person name="Hammon N."/>
            <person name="Israni S."/>
            <person name="Dalin E."/>
            <person name="Tice H."/>
            <person name="Pitluck S."/>
            <person name="Fredrickson J.K."/>
            <person name="Kolker E."/>
            <person name="McCuel L.A."/>
            <person name="DiChristina T."/>
            <person name="Nealson K.H."/>
            <person name="Newman D."/>
            <person name="Tiedje J.M."/>
            <person name="Zhou J."/>
            <person name="Romine M.F."/>
            <person name="Culley D.E."/>
            <person name="Serres M."/>
            <person name="Chertkov O."/>
            <person name="Brettin T."/>
            <person name="Bruce D."/>
            <person name="Han C."/>
            <person name="Tapia R."/>
            <person name="Gilna P."/>
            <person name="Schmutz J."/>
            <person name="Larimer F."/>
            <person name="Land M."/>
            <person name="Hauser L."/>
            <person name="Kyrpides N."/>
            <person name="Mikhailova N."/>
            <person name="Richardson P."/>
        </authorList>
    </citation>
    <scope>NUCLEOTIDE SEQUENCE [LARGE SCALE GENOMIC DNA]</scope>
    <source>
        <strain>NCIMB 400</strain>
    </source>
</reference>
<evidence type="ECO:0000255" key="1">
    <source>
        <dbReference type="HAMAP-Rule" id="MF_01866"/>
    </source>
</evidence>
<feature type="chain" id="PRO_0000375369" description="YcgL domain-containing protein Sfri_1738">
    <location>
        <begin position="1"/>
        <end position="92"/>
    </location>
</feature>
<feature type="domain" description="YcgL" evidence="1">
    <location>
        <begin position="1"/>
        <end position="85"/>
    </location>
</feature>
<organism>
    <name type="scientific">Shewanella frigidimarina (strain NCIMB 400)</name>
    <dbReference type="NCBI Taxonomy" id="318167"/>
    <lineage>
        <taxon>Bacteria</taxon>
        <taxon>Pseudomonadati</taxon>
        <taxon>Pseudomonadota</taxon>
        <taxon>Gammaproteobacteria</taxon>
        <taxon>Alteromonadales</taxon>
        <taxon>Shewanellaceae</taxon>
        <taxon>Shewanella</taxon>
    </lineage>
</organism>
<gene>
    <name type="ordered locus">Sfri_1738</name>
</gene>
<sequence length="92" mass="10607">MICAVYKSGRRADTYLFVKKRDVFDDVPEPLMEMFGSKTLVMIVPLSKRDHLGIADIDKVKVALVEQGYYLQIPPPQINLLEQHKQELAFKK</sequence>
<dbReference type="EMBL" id="CP000447">
    <property type="protein sequence ID" value="ABI71588.1"/>
    <property type="molecule type" value="Genomic_DNA"/>
</dbReference>
<dbReference type="RefSeq" id="WP_011637204.1">
    <property type="nucleotide sequence ID" value="NC_008345.1"/>
</dbReference>
<dbReference type="SMR" id="Q083H7"/>
<dbReference type="STRING" id="318167.Sfri_1738"/>
<dbReference type="KEGG" id="sfr:Sfri_1738"/>
<dbReference type="eggNOG" id="COG3100">
    <property type="taxonomic scope" value="Bacteria"/>
</dbReference>
<dbReference type="HOGENOM" id="CLU_155118_1_0_6"/>
<dbReference type="OrthoDB" id="7062382at2"/>
<dbReference type="Proteomes" id="UP000000684">
    <property type="component" value="Chromosome"/>
</dbReference>
<dbReference type="Gene3D" id="3.10.510.20">
    <property type="entry name" value="YcgL domain"/>
    <property type="match status" value="1"/>
</dbReference>
<dbReference type="HAMAP" id="MF_01866">
    <property type="entry name" value="UPF0745"/>
    <property type="match status" value="1"/>
</dbReference>
<dbReference type="InterPro" id="IPR038068">
    <property type="entry name" value="YcgL-like_sf"/>
</dbReference>
<dbReference type="InterPro" id="IPR027354">
    <property type="entry name" value="YcgL_dom"/>
</dbReference>
<dbReference type="PANTHER" id="PTHR38109">
    <property type="entry name" value="PROTEIN YCGL"/>
    <property type="match status" value="1"/>
</dbReference>
<dbReference type="PANTHER" id="PTHR38109:SF1">
    <property type="entry name" value="PROTEIN YCGL"/>
    <property type="match status" value="1"/>
</dbReference>
<dbReference type="Pfam" id="PF05166">
    <property type="entry name" value="YcgL"/>
    <property type="match status" value="1"/>
</dbReference>
<dbReference type="SUPFAM" id="SSF160191">
    <property type="entry name" value="YcgL-like"/>
    <property type="match status" value="1"/>
</dbReference>
<dbReference type="PROSITE" id="PS51648">
    <property type="entry name" value="YCGL"/>
    <property type="match status" value="1"/>
</dbReference>